<feature type="chain" id="PRO_0000099690" description="Uncharacterized 7.9 kDa protein">
    <location>
        <begin position="1"/>
        <end position="72"/>
    </location>
</feature>
<proteinExistence type="predicted"/>
<name>YVDD_VACCC</name>
<keyword id="KW-1185">Reference proteome</keyword>
<reference key="1">
    <citation type="journal article" date="1990" name="Virology">
        <title>The complete DNA sequence of vaccinia virus.</title>
        <authorList>
            <person name="Goebel S.J."/>
            <person name="Johnson G.P."/>
            <person name="Perkus M.E."/>
            <person name="Davis S.W."/>
            <person name="Winslow J.P."/>
            <person name="Paoletti E."/>
        </authorList>
    </citation>
    <scope>NUCLEOTIDE SEQUENCE [LARGE SCALE GENOMIC DNA]</scope>
</reference>
<reference key="2">
    <citation type="journal article" date="1990" name="Virology">
        <title>Appendix to 'The complete DNA sequence of vaccinia virus'.</title>
        <authorList>
            <person name="Goebel S.J."/>
            <person name="Johnson G.P."/>
            <person name="Perkus M.E."/>
            <person name="Davis S.W."/>
            <person name="Winslow J.P."/>
            <person name="Paoletti E."/>
        </authorList>
    </citation>
    <scope>COMPLETE GENOME</scope>
</reference>
<protein>
    <recommendedName>
        <fullName>Uncharacterized 7.9 kDa protein</fullName>
    </recommendedName>
</protein>
<dbReference type="EMBL" id="M35027">
    <property type="protein sequence ID" value="AAA48103.1"/>
    <property type="molecule type" value="Genomic_DNA"/>
</dbReference>
<dbReference type="PIR" id="A03880">
    <property type="entry name" value="QQVZ9"/>
</dbReference>
<dbReference type="Proteomes" id="UP000008269">
    <property type="component" value="Segment"/>
</dbReference>
<sequence length="72" mass="7877">MIVAWFLLLILLEKHGLPMTQGSVNFLILSDLIFFDPLQAKSGSSLQNTDLFKCMLAINGLGPLSNTSVKIV</sequence>
<organismHost>
    <name type="scientific">Homo sapiens</name>
    <name type="common">Human</name>
    <dbReference type="NCBI Taxonomy" id="9606"/>
</organismHost>
<accession>P68479</accession>
<accession>P04306</accession>
<gene>
    <name type="ORF">D ORF D</name>
</gene>
<organism>
    <name type="scientific">Vaccinia virus (strain Copenhagen)</name>
    <name type="common">VACV</name>
    <dbReference type="NCBI Taxonomy" id="10249"/>
    <lineage>
        <taxon>Viruses</taxon>
        <taxon>Varidnaviria</taxon>
        <taxon>Bamfordvirae</taxon>
        <taxon>Nucleocytoviricota</taxon>
        <taxon>Pokkesviricetes</taxon>
        <taxon>Chitovirales</taxon>
        <taxon>Poxviridae</taxon>
        <taxon>Chordopoxvirinae</taxon>
        <taxon>Orthopoxvirus</taxon>
        <taxon>Vaccinia virus</taxon>
    </lineage>
</organism>